<gene>
    <name evidence="4" type="primary">hpdC</name>
    <name type="ordered locus">CD196_0166</name>
</gene>
<reference key="1">
    <citation type="journal article" date="2009" name="Genome Biol.">
        <title>Comparative genome and phenotypic analysis of Clostridium difficile 027 strains provides insight into the evolution of a hypervirulent bacterium.</title>
        <authorList>
            <person name="Stabler R.A."/>
            <person name="He M."/>
            <person name="Dawson L."/>
            <person name="Martin M."/>
            <person name="Valiente E."/>
            <person name="Corton C."/>
            <person name="Lawley T.D."/>
            <person name="Sebaihia M."/>
            <person name="Quail M.A."/>
            <person name="Rose G."/>
            <person name="Gerding D.N."/>
            <person name="Gibert M."/>
            <person name="Popoff M.R."/>
            <person name="Parkhill J."/>
            <person name="Dougan G."/>
            <person name="Wren B.W."/>
        </authorList>
    </citation>
    <scope>NUCLEOTIDE SEQUENCE [LARGE SCALE GENOMIC DNA]</scope>
    <source>
        <strain>CD196</strain>
    </source>
</reference>
<proteinExistence type="inferred from homology"/>
<accession>C9XIS6</accession>
<feature type="chain" id="PRO_0000403693" description="4-hydroxyphenylacetate decarboxylase small subunit">
    <location>
        <begin position="1"/>
        <end position="85"/>
    </location>
</feature>
<feature type="binding site" evidence="1">
    <location>
        <position position="4"/>
    </location>
    <ligand>
        <name>[4Fe-4S] cluster</name>
        <dbReference type="ChEBI" id="CHEBI:49883"/>
        <label>1</label>
    </ligand>
</feature>
<feature type="binding site" evidence="1">
    <location>
        <position position="7"/>
    </location>
    <ligand>
        <name>[4Fe-4S] cluster</name>
        <dbReference type="ChEBI" id="CHEBI:49883"/>
        <label>1</label>
    </ligand>
</feature>
<feature type="binding site" evidence="1">
    <location>
        <position position="20"/>
    </location>
    <ligand>
        <name>[4Fe-4S] cluster</name>
        <dbReference type="ChEBI" id="CHEBI:49883"/>
        <label>1</label>
    </ligand>
</feature>
<feature type="binding site" evidence="1">
    <location>
        <position position="34"/>
    </location>
    <ligand>
        <name>[4Fe-4S] cluster</name>
        <dbReference type="ChEBI" id="CHEBI:49883"/>
        <label>1</label>
    </ligand>
</feature>
<feature type="binding site" evidence="1">
    <location>
        <position position="43"/>
    </location>
    <ligand>
        <name>[4Fe-4S] cluster</name>
        <dbReference type="ChEBI" id="CHEBI:49883"/>
        <label>2</label>
    </ligand>
</feature>
<feature type="binding site" evidence="1">
    <location>
        <position position="46"/>
    </location>
    <ligand>
        <name>[4Fe-4S] cluster</name>
        <dbReference type="ChEBI" id="CHEBI:49883"/>
        <label>2</label>
    </ligand>
</feature>
<feature type="binding site" evidence="1">
    <location>
        <position position="60"/>
    </location>
    <ligand>
        <name>[4Fe-4S] cluster</name>
        <dbReference type="ChEBI" id="CHEBI:49883"/>
        <label>2</label>
    </ligand>
</feature>
<feature type="binding site" evidence="1">
    <location>
        <position position="78"/>
    </location>
    <ligand>
        <name>[4Fe-4S] cluster</name>
        <dbReference type="ChEBI" id="CHEBI:49883"/>
        <label>2</label>
    </ligand>
</feature>
<sequence length="85" mass="9520">MRKHSDCMNFCAVDATKGICRLSKQMINLDDSACPEIKVMPKCKNCKNFVEANDEGIGKCVGLEKEDWVYSTLNAITCEGHVFNE</sequence>
<dbReference type="EC" id="4.1.1.83" evidence="1"/>
<dbReference type="EMBL" id="FN538970">
    <property type="protein sequence ID" value="CBA60345.1"/>
    <property type="molecule type" value="Genomic_DNA"/>
</dbReference>
<dbReference type="RefSeq" id="WP_009888000.1">
    <property type="nucleotide sequence ID" value="NZ_CP059592.1"/>
</dbReference>
<dbReference type="SMR" id="C9XIS6"/>
<dbReference type="KEGG" id="cdc:CD196_0166"/>
<dbReference type="HOGENOM" id="CLU_187388_0_0_9"/>
<dbReference type="Proteomes" id="UP000002068">
    <property type="component" value="Chromosome"/>
</dbReference>
<dbReference type="GO" id="GO:0051539">
    <property type="term" value="F:4 iron, 4 sulfur cluster binding"/>
    <property type="evidence" value="ECO:0007669"/>
    <property type="project" value="UniProtKB-KW"/>
</dbReference>
<dbReference type="GO" id="GO:0043722">
    <property type="term" value="F:4-hydroxyphenylacetate decarboxylase activity"/>
    <property type="evidence" value="ECO:0007669"/>
    <property type="project" value="UniProtKB-EC"/>
</dbReference>
<dbReference type="GO" id="GO:0046872">
    <property type="term" value="F:metal ion binding"/>
    <property type="evidence" value="ECO:0007669"/>
    <property type="project" value="UniProtKB-KW"/>
</dbReference>
<dbReference type="Gene3D" id="2.20.70.100">
    <property type="match status" value="2"/>
</dbReference>
<dbReference type="InterPro" id="IPR041125">
    <property type="entry name" value="4HPAD_g_N"/>
</dbReference>
<dbReference type="InterPro" id="IPR053727">
    <property type="entry name" value="HPA_decarboxylase_ss_sf"/>
</dbReference>
<dbReference type="InterPro" id="IPR040923">
    <property type="entry name" value="HpdC_C"/>
</dbReference>
<dbReference type="NCBIfam" id="NF033716">
    <property type="entry name" value="glycyl_HPDL_Sma"/>
    <property type="match status" value="1"/>
</dbReference>
<dbReference type="Pfam" id="PF18671">
    <property type="entry name" value="4HPAD_g_N"/>
    <property type="match status" value="1"/>
</dbReference>
<dbReference type="Pfam" id="PF18524">
    <property type="entry name" value="HPIP_like"/>
    <property type="match status" value="1"/>
</dbReference>
<organism>
    <name type="scientific">Clostridioides difficile (strain CD196)</name>
    <name type="common">Peptoclostridium difficile</name>
    <dbReference type="NCBI Taxonomy" id="645462"/>
    <lineage>
        <taxon>Bacteria</taxon>
        <taxon>Bacillati</taxon>
        <taxon>Bacillota</taxon>
        <taxon>Clostridia</taxon>
        <taxon>Peptostreptococcales</taxon>
        <taxon>Peptostreptococcaceae</taxon>
        <taxon>Clostridioides</taxon>
    </lineage>
</organism>
<comment type="function">
    <text evidence="1 2">Component of the HPA decarboxylase that decarboxylates phenylacetates with a hydroxyl group in the p-position. Active toward 4-hydroxyphenylacetate and 3,4-dihydroxyphenylacetate, forming 4-methylphenol and 4-methylcatechol, respectively. Is likely involved in the catabolism of aromatic amino acids such as tyrosine fermentation. 4-methylphenol (p-cresol) formation provides metabolic toxicity, which allows an active suppression of other microbes and may provide growth advantages for the producers in highly competitive environments (By similarity). The small subunit is essential for enzymatic activity of HPA decarboxylase, and also seems to be involved in the regulation of the enzyme oligomeric state and catalytic activity (By similarity).</text>
</comment>
<comment type="catalytic activity">
    <reaction evidence="1">
        <text>4-hydroxyphenylacetate + H(+) = 4-methylphenol + CO2</text>
        <dbReference type="Rhea" id="RHEA:22732"/>
        <dbReference type="ChEBI" id="CHEBI:15378"/>
        <dbReference type="ChEBI" id="CHEBI:16526"/>
        <dbReference type="ChEBI" id="CHEBI:17847"/>
        <dbReference type="ChEBI" id="CHEBI:48999"/>
        <dbReference type="EC" id="4.1.1.83"/>
    </reaction>
    <physiologicalReaction direction="left-to-right" evidence="1">
        <dbReference type="Rhea" id="RHEA:22733"/>
    </physiologicalReaction>
</comment>
<comment type="catalytic activity">
    <reaction evidence="1">
        <text>3,4-dihydroxyphenylacetate + H(+) = 4-methylcatechol + CO2</text>
        <dbReference type="Rhea" id="RHEA:62556"/>
        <dbReference type="ChEBI" id="CHEBI:15378"/>
        <dbReference type="ChEBI" id="CHEBI:16526"/>
        <dbReference type="ChEBI" id="CHEBI:17254"/>
        <dbReference type="ChEBI" id="CHEBI:17612"/>
        <dbReference type="EC" id="4.1.1.83"/>
    </reaction>
    <physiologicalReaction direction="left-to-right" evidence="1">
        <dbReference type="Rhea" id="RHEA:62557"/>
    </physiologicalReaction>
</comment>
<comment type="cofactor">
    <cofactor evidence="1">
        <name>[4Fe-4S] cluster</name>
        <dbReference type="ChEBI" id="CHEBI:49883"/>
    </cofactor>
    <text evidence="1">Binds 2 [4Fe-4S] clusters per subunit.</text>
</comment>
<comment type="subunit">
    <text evidence="1">Heterooctamer consisting of 4 large (HpdB) subunits and 4 small (HpdC) subunits, arranged as a tetramer of heterodimers.</text>
</comment>
<comment type="similarity">
    <text evidence="3">Belongs to the HPA decarboxylase small subunit family.</text>
</comment>
<evidence type="ECO:0000250" key="1">
    <source>
        <dbReference type="UniProtKB" id="Q38HX3"/>
    </source>
</evidence>
<evidence type="ECO:0000250" key="2">
    <source>
        <dbReference type="UniProtKB" id="Q84F15"/>
    </source>
</evidence>
<evidence type="ECO:0000305" key="3"/>
<evidence type="ECO:0000312" key="4">
    <source>
        <dbReference type="EMBL" id="CBA60345.1"/>
    </source>
</evidence>
<name>HPDS_CLODC</name>
<keyword id="KW-0004">4Fe-4S</keyword>
<keyword id="KW-0408">Iron</keyword>
<keyword id="KW-0411">Iron-sulfur</keyword>
<keyword id="KW-0456">Lyase</keyword>
<keyword id="KW-0479">Metal-binding</keyword>
<protein>
    <recommendedName>
        <fullName evidence="1">4-hydroxyphenylacetate decarboxylase small subunit</fullName>
        <shortName evidence="1">HPA decarboxylase small subunit</shortName>
        <ecNumber evidence="1">4.1.1.83</ecNumber>
    </recommendedName>
    <alternativeName>
        <fullName evidence="1">4-hydroxyphenylacetate decarboxylase gamma subunit</fullName>
    </alternativeName>
    <alternativeName>
        <fullName evidence="1">p-hydroxyphenylacetate decarboxylase small subunit</fullName>
    </alternativeName>
</protein>